<comment type="function">
    <text evidence="1">Catalyzes the covalent attachment of the prokaryotic ubiquitin-like protein modifier Pup to the proteasomal substrate proteins, thereby targeting them for proteasomal degradation. This tagging system is termed pupylation. The ligation reaction involves the side-chain carboxylate of the C-terminal glutamate of Pup and the side-chain amino group of a substrate lysine.</text>
</comment>
<comment type="catalytic activity">
    <reaction evidence="1">
        <text>ATP + [prokaryotic ubiquitin-like protein]-L-glutamate + [protein]-L-lysine = ADP + phosphate + N(6)-([prokaryotic ubiquitin-like protein]-gamma-L-glutamyl)-[protein]-L-lysine.</text>
        <dbReference type="EC" id="6.3.1.19"/>
    </reaction>
</comment>
<comment type="pathway">
    <text evidence="1">Protein degradation; proteasomal Pup-dependent pathway.</text>
</comment>
<comment type="pathway">
    <text evidence="1">Protein modification; protein pupylation.</text>
</comment>
<comment type="miscellaneous">
    <text evidence="1">The reaction mechanism probably proceeds via the activation of Pup by phosphorylation of its C-terminal glutamate, which is then subject to nucleophilic attack by the substrate lysine, resulting in an isopeptide bond and the release of phosphate as a good leaving group.</text>
</comment>
<comment type="similarity">
    <text evidence="1">Belongs to the Pup ligase/Pup deamidase family. Pup-conjugating enzyme subfamily.</text>
</comment>
<evidence type="ECO:0000255" key="1">
    <source>
        <dbReference type="HAMAP-Rule" id="MF_02111"/>
    </source>
</evidence>
<proteinExistence type="inferred from homology"/>
<gene>
    <name evidence="1" type="primary">pafA</name>
    <name type="ordered locus">MAP_1833c</name>
</gene>
<keyword id="KW-0067">ATP-binding</keyword>
<keyword id="KW-0436">Ligase</keyword>
<keyword id="KW-0460">Magnesium</keyword>
<keyword id="KW-0479">Metal-binding</keyword>
<keyword id="KW-0547">Nucleotide-binding</keyword>
<keyword id="KW-1185">Reference proteome</keyword>
<keyword id="KW-0833">Ubl conjugation pathway</keyword>
<dbReference type="EC" id="6.3.1.19" evidence="1"/>
<dbReference type="EMBL" id="AE016958">
    <property type="protein sequence ID" value="AAS04150.1"/>
    <property type="molecule type" value="Genomic_DNA"/>
</dbReference>
<dbReference type="SMR" id="Q73YX0"/>
<dbReference type="STRING" id="262316.MAP_1833c"/>
<dbReference type="KEGG" id="mpa:MAP_1833c"/>
<dbReference type="eggNOG" id="COG0638">
    <property type="taxonomic scope" value="Bacteria"/>
</dbReference>
<dbReference type="HOGENOM" id="CLU_040524_0_1_11"/>
<dbReference type="UniPathway" id="UPA00997"/>
<dbReference type="UniPathway" id="UPA00998"/>
<dbReference type="Proteomes" id="UP000000580">
    <property type="component" value="Chromosome"/>
</dbReference>
<dbReference type="GO" id="GO:0005524">
    <property type="term" value="F:ATP binding"/>
    <property type="evidence" value="ECO:0007669"/>
    <property type="project" value="UniProtKB-UniRule"/>
</dbReference>
<dbReference type="GO" id="GO:0016879">
    <property type="term" value="F:ligase activity, forming carbon-nitrogen bonds"/>
    <property type="evidence" value="ECO:0007669"/>
    <property type="project" value="InterPro"/>
</dbReference>
<dbReference type="GO" id="GO:0000287">
    <property type="term" value="F:magnesium ion binding"/>
    <property type="evidence" value="ECO:0007669"/>
    <property type="project" value="UniProtKB-UniRule"/>
</dbReference>
<dbReference type="GO" id="GO:0019787">
    <property type="term" value="F:ubiquitin-like protein transferase activity"/>
    <property type="evidence" value="ECO:0007669"/>
    <property type="project" value="UniProtKB-UniRule"/>
</dbReference>
<dbReference type="GO" id="GO:0019941">
    <property type="term" value="P:modification-dependent protein catabolic process"/>
    <property type="evidence" value="ECO:0007669"/>
    <property type="project" value="UniProtKB-UniRule"/>
</dbReference>
<dbReference type="GO" id="GO:0010498">
    <property type="term" value="P:proteasomal protein catabolic process"/>
    <property type="evidence" value="ECO:0007669"/>
    <property type="project" value="UniProtKB-UniRule"/>
</dbReference>
<dbReference type="GO" id="GO:0070490">
    <property type="term" value="P:protein pupylation"/>
    <property type="evidence" value="ECO:0007669"/>
    <property type="project" value="UniProtKB-UniRule"/>
</dbReference>
<dbReference type="HAMAP" id="MF_02111">
    <property type="entry name" value="Pup_ligase"/>
    <property type="match status" value="1"/>
</dbReference>
<dbReference type="InterPro" id="IPR022279">
    <property type="entry name" value="Pup_ligase"/>
</dbReference>
<dbReference type="InterPro" id="IPR004347">
    <property type="entry name" value="Pup_ligase/deamidase"/>
</dbReference>
<dbReference type="NCBIfam" id="TIGR03686">
    <property type="entry name" value="pupylate_PafA"/>
    <property type="match status" value="1"/>
</dbReference>
<dbReference type="PANTHER" id="PTHR42307">
    <property type="entry name" value="PUP DEAMIDASE/DEPUPYLASE"/>
    <property type="match status" value="1"/>
</dbReference>
<dbReference type="PANTHER" id="PTHR42307:SF3">
    <property type="entry name" value="PUP--PROTEIN LIGASE"/>
    <property type="match status" value="1"/>
</dbReference>
<dbReference type="Pfam" id="PF03136">
    <property type="entry name" value="Pup_ligase"/>
    <property type="match status" value="1"/>
</dbReference>
<dbReference type="PIRSF" id="PIRSF018077">
    <property type="entry name" value="UCP018077"/>
    <property type="match status" value="1"/>
</dbReference>
<sequence>MQRRIMGIETEFGVTCTFHGHRRLSPDEVARYLFRRVVSWGRSSNVFLRNGARLYLDVGSHPEYATAECDNLVQLVTHDRAGEWVLEDLLVDAEQRLADEGIGGDIYLFKNNTDSAGNSYGCHENYLIVRAGEFSRISDVLLPFLVTRQLICGAGKVLQTPKAATFCLSQRAEHIWEGVSSATTRSRPIINTRDEPHADAEKYRRLHVIVGDSNMCETTTMLKVGTAALVLEMIEAGVPFRDFSLDNPIRAIREVSHDITGRRPVRLAGGRQASALDIQREYYSRAVEHLQTREPNAQIEQIVDLWGRQLDAVESQDFAKVDTEIDWVIKRKLFQRYQDRYNMELSDPKIAQLDLAYHDIKRGRGVFDLLQRKGLAARVTTDEDIAEAVDTPPQTTRARLRGEFISAAQAAGRDFTVDWVHLKLNDQAQRTVLCKDPFRAVDERVKRLIASM</sequence>
<protein>
    <recommendedName>
        <fullName evidence="1">Pup--protein ligase</fullName>
        <ecNumber evidence="1">6.3.1.19</ecNumber>
    </recommendedName>
    <alternativeName>
        <fullName evidence="1">Proteasome accessory factor A</fullName>
    </alternativeName>
    <alternativeName>
        <fullName evidence="1">Pup-conjugating enzyme</fullName>
    </alternativeName>
</protein>
<accession>Q73YX0</accession>
<organism>
    <name type="scientific">Mycolicibacterium paratuberculosis (strain ATCC BAA-968 / K-10)</name>
    <name type="common">Mycobacterium paratuberculosis</name>
    <dbReference type="NCBI Taxonomy" id="262316"/>
    <lineage>
        <taxon>Bacteria</taxon>
        <taxon>Bacillati</taxon>
        <taxon>Actinomycetota</taxon>
        <taxon>Actinomycetes</taxon>
        <taxon>Mycobacteriales</taxon>
        <taxon>Mycobacteriaceae</taxon>
        <taxon>Mycobacterium</taxon>
        <taxon>Mycobacterium avium complex (MAC)</taxon>
    </lineage>
</organism>
<name>PAFA_MYCPA</name>
<reference key="1">
    <citation type="journal article" date="2005" name="Proc. Natl. Acad. Sci. U.S.A.">
        <title>The complete genome sequence of Mycobacterium avium subspecies paratuberculosis.</title>
        <authorList>
            <person name="Li L."/>
            <person name="Bannantine J.P."/>
            <person name="Zhang Q."/>
            <person name="Amonsin A."/>
            <person name="May B.J."/>
            <person name="Alt D."/>
            <person name="Banerji N."/>
            <person name="Kanjilal S."/>
            <person name="Kapur V."/>
        </authorList>
    </citation>
    <scope>NUCLEOTIDE SEQUENCE [LARGE SCALE GENOMIC DNA]</scope>
    <source>
        <strain>ATCC BAA-968 / K-10</strain>
    </source>
</reference>
<feature type="chain" id="PRO_0000395930" description="Pup--protein ligase">
    <location>
        <begin position="1"/>
        <end position="452"/>
    </location>
</feature>
<feature type="active site" description="Proton acceptor" evidence="1">
    <location>
        <position position="57"/>
    </location>
</feature>
<feature type="binding site" evidence="1">
    <location>
        <position position="9"/>
    </location>
    <ligand>
        <name>Mg(2+)</name>
        <dbReference type="ChEBI" id="CHEBI:18420"/>
    </ligand>
</feature>
<feature type="binding site" evidence="1">
    <location>
        <position position="53"/>
    </location>
    <ligand>
        <name>ATP</name>
        <dbReference type="ChEBI" id="CHEBI:30616"/>
    </ligand>
</feature>
<feature type="binding site" evidence="1">
    <location>
        <position position="55"/>
    </location>
    <ligand>
        <name>Mg(2+)</name>
        <dbReference type="ChEBI" id="CHEBI:18420"/>
    </ligand>
</feature>
<feature type="binding site" evidence="1">
    <location>
        <position position="63"/>
    </location>
    <ligand>
        <name>Mg(2+)</name>
        <dbReference type="ChEBI" id="CHEBI:18420"/>
    </ligand>
</feature>
<feature type="binding site" evidence="1">
    <location>
        <position position="66"/>
    </location>
    <ligand>
        <name>ATP</name>
        <dbReference type="ChEBI" id="CHEBI:30616"/>
    </ligand>
</feature>
<feature type="binding site" evidence="1">
    <location>
        <position position="419"/>
    </location>
    <ligand>
        <name>ATP</name>
        <dbReference type="ChEBI" id="CHEBI:30616"/>
    </ligand>
</feature>